<feature type="chain" id="PRO_0000338655" description="3-demethoxyubiquinol 3-hydroxylase">
    <location>
        <begin position="1"/>
        <end position="206"/>
    </location>
</feature>
<feature type="binding site" evidence="1">
    <location>
        <position position="55"/>
    </location>
    <ligand>
        <name>Fe cation</name>
        <dbReference type="ChEBI" id="CHEBI:24875"/>
        <label>1</label>
    </ligand>
</feature>
<feature type="binding site" evidence="1">
    <location>
        <position position="85"/>
    </location>
    <ligand>
        <name>Fe cation</name>
        <dbReference type="ChEBI" id="CHEBI:24875"/>
        <label>1</label>
    </ligand>
</feature>
<feature type="binding site" evidence="1">
    <location>
        <position position="85"/>
    </location>
    <ligand>
        <name>Fe cation</name>
        <dbReference type="ChEBI" id="CHEBI:24875"/>
        <label>2</label>
    </ligand>
</feature>
<feature type="binding site" evidence="1">
    <location>
        <position position="88"/>
    </location>
    <ligand>
        <name>Fe cation</name>
        <dbReference type="ChEBI" id="CHEBI:24875"/>
        <label>1</label>
    </ligand>
</feature>
<feature type="binding site" evidence="1">
    <location>
        <position position="137"/>
    </location>
    <ligand>
        <name>Fe cation</name>
        <dbReference type="ChEBI" id="CHEBI:24875"/>
        <label>2</label>
    </ligand>
</feature>
<feature type="binding site" evidence="1">
    <location>
        <position position="169"/>
    </location>
    <ligand>
        <name>Fe cation</name>
        <dbReference type="ChEBI" id="CHEBI:24875"/>
        <label>1</label>
    </ligand>
</feature>
<feature type="binding site" evidence="1">
    <location>
        <position position="169"/>
    </location>
    <ligand>
        <name>Fe cation</name>
        <dbReference type="ChEBI" id="CHEBI:24875"/>
        <label>2</label>
    </ligand>
</feature>
<feature type="binding site" evidence="1">
    <location>
        <position position="172"/>
    </location>
    <ligand>
        <name>Fe cation</name>
        <dbReference type="ChEBI" id="CHEBI:24875"/>
        <label>2</label>
    </ligand>
</feature>
<organism>
    <name type="scientific">Azoarcus sp. (strain BH72)</name>
    <dbReference type="NCBI Taxonomy" id="418699"/>
    <lineage>
        <taxon>Bacteria</taxon>
        <taxon>Pseudomonadati</taxon>
        <taxon>Pseudomonadota</taxon>
        <taxon>Betaproteobacteria</taxon>
        <taxon>Rhodocyclales</taxon>
        <taxon>Zoogloeaceae</taxon>
        <taxon>Azoarcus</taxon>
    </lineage>
</organism>
<keyword id="KW-1003">Cell membrane</keyword>
<keyword id="KW-0408">Iron</keyword>
<keyword id="KW-0472">Membrane</keyword>
<keyword id="KW-0479">Metal-binding</keyword>
<keyword id="KW-0503">Monooxygenase</keyword>
<keyword id="KW-0560">Oxidoreductase</keyword>
<keyword id="KW-1185">Reference proteome</keyword>
<keyword id="KW-0831">Ubiquinone biosynthesis</keyword>
<accession>A1K973</accession>
<proteinExistence type="inferred from homology"/>
<evidence type="ECO:0000255" key="1">
    <source>
        <dbReference type="HAMAP-Rule" id="MF_01658"/>
    </source>
</evidence>
<sequence>MFDKAIIEFDKALRTVFAPARSVRPVPGDDVPDAPLDDEQKRHAAALMRVNHVGEICAQALYQGQAIMSGDERVREELQRASHEETEHLAWTEQRIAELGGRKSLLNPLWYGGALAIGMLAGRFGDRWNLGFLAETERQVEAHLTSHLERLPADDRKSRAIVEQMRTDEVEHAETALKLGGRELPLPVRSAMKLASRVMTTAAYRV</sequence>
<comment type="function">
    <text evidence="1">Catalyzes the hydroxylation of 2-nonaprenyl-3-methyl-6-methoxy-1,4-benzoquinol during ubiquinone biosynthesis.</text>
</comment>
<comment type="catalytic activity">
    <reaction evidence="1">
        <text>a 5-methoxy-2-methyl-3-(all-trans-polyprenyl)benzene-1,4-diol + AH2 + O2 = a 3-demethylubiquinol + A + H2O</text>
        <dbReference type="Rhea" id="RHEA:50908"/>
        <dbReference type="Rhea" id="RHEA-COMP:10859"/>
        <dbReference type="Rhea" id="RHEA-COMP:10914"/>
        <dbReference type="ChEBI" id="CHEBI:13193"/>
        <dbReference type="ChEBI" id="CHEBI:15377"/>
        <dbReference type="ChEBI" id="CHEBI:15379"/>
        <dbReference type="ChEBI" id="CHEBI:17499"/>
        <dbReference type="ChEBI" id="CHEBI:84167"/>
        <dbReference type="ChEBI" id="CHEBI:84422"/>
        <dbReference type="EC" id="1.14.99.60"/>
    </reaction>
</comment>
<comment type="cofactor">
    <cofactor evidence="1">
        <name>Fe cation</name>
        <dbReference type="ChEBI" id="CHEBI:24875"/>
    </cofactor>
    <text evidence="1">Binds 2 iron ions per subunit.</text>
</comment>
<comment type="pathway">
    <text evidence="1">Cofactor biosynthesis; ubiquinone biosynthesis.</text>
</comment>
<comment type="subcellular location">
    <subcellularLocation>
        <location evidence="1">Cell membrane</location>
        <topology evidence="1">Peripheral membrane protein</topology>
    </subcellularLocation>
</comment>
<comment type="similarity">
    <text evidence="1">Belongs to the COQ7 family.</text>
</comment>
<name>COQ7_AZOSB</name>
<dbReference type="EC" id="1.14.99.60" evidence="1"/>
<dbReference type="EMBL" id="AM406670">
    <property type="protein sequence ID" value="CAL95378.1"/>
    <property type="molecule type" value="Genomic_DNA"/>
</dbReference>
<dbReference type="RefSeq" id="WP_011766488.1">
    <property type="nucleotide sequence ID" value="NC_008702.1"/>
</dbReference>
<dbReference type="SMR" id="A1K973"/>
<dbReference type="STRING" id="62928.azo2762"/>
<dbReference type="KEGG" id="azo:azo2762"/>
<dbReference type="eggNOG" id="COG2941">
    <property type="taxonomic scope" value="Bacteria"/>
</dbReference>
<dbReference type="HOGENOM" id="CLU_088601_0_0_4"/>
<dbReference type="UniPathway" id="UPA00232"/>
<dbReference type="Proteomes" id="UP000002588">
    <property type="component" value="Chromosome"/>
</dbReference>
<dbReference type="GO" id="GO:0005886">
    <property type="term" value="C:plasma membrane"/>
    <property type="evidence" value="ECO:0007669"/>
    <property type="project" value="UniProtKB-SubCell"/>
</dbReference>
<dbReference type="GO" id="GO:0008682">
    <property type="term" value="F:3-demethoxyubiquinol 3-hydroxylase activity"/>
    <property type="evidence" value="ECO:0007669"/>
    <property type="project" value="UniProtKB-EC"/>
</dbReference>
<dbReference type="GO" id="GO:0046872">
    <property type="term" value="F:metal ion binding"/>
    <property type="evidence" value="ECO:0007669"/>
    <property type="project" value="UniProtKB-KW"/>
</dbReference>
<dbReference type="GO" id="GO:0006744">
    <property type="term" value="P:ubiquinone biosynthetic process"/>
    <property type="evidence" value="ECO:0007669"/>
    <property type="project" value="UniProtKB-UniRule"/>
</dbReference>
<dbReference type="CDD" id="cd01042">
    <property type="entry name" value="DMQH"/>
    <property type="match status" value="1"/>
</dbReference>
<dbReference type="Gene3D" id="1.20.1260.10">
    <property type="match status" value="1"/>
</dbReference>
<dbReference type="HAMAP" id="MF_01658">
    <property type="entry name" value="COQ7"/>
    <property type="match status" value="1"/>
</dbReference>
<dbReference type="InterPro" id="IPR047809">
    <property type="entry name" value="COQ7_proteobact"/>
</dbReference>
<dbReference type="InterPro" id="IPR012347">
    <property type="entry name" value="Ferritin-like"/>
</dbReference>
<dbReference type="InterPro" id="IPR009078">
    <property type="entry name" value="Ferritin-like_SF"/>
</dbReference>
<dbReference type="InterPro" id="IPR011566">
    <property type="entry name" value="Ubq_synth_Coq7"/>
</dbReference>
<dbReference type="NCBIfam" id="NF033656">
    <property type="entry name" value="DMQ_monoox_COQ7"/>
    <property type="match status" value="1"/>
</dbReference>
<dbReference type="PANTHER" id="PTHR11237:SF4">
    <property type="entry name" value="5-DEMETHOXYUBIQUINONE HYDROXYLASE, MITOCHONDRIAL"/>
    <property type="match status" value="1"/>
</dbReference>
<dbReference type="PANTHER" id="PTHR11237">
    <property type="entry name" value="COENZYME Q10 BIOSYNTHESIS PROTEIN 7"/>
    <property type="match status" value="1"/>
</dbReference>
<dbReference type="Pfam" id="PF03232">
    <property type="entry name" value="COQ7"/>
    <property type="match status" value="1"/>
</dbReference>
<dbReference type="SUPFAM" id="SSF47240">
    <property type="entry name" value="Ferritin-like"/>
    <property type="match status" value="1"/>
</dbReference>
<protein>
    <recommendedName>
        <fullName evidence="1">3-demethoxyubiquinol 3-hydroxylase</fullName>
        <shortName evidence="1">DMQ hydroxylase</shortName>
        <ecNumber evidence="1">1.14.99.60</ecNumber>
    </recommendedName>
    <alternativeName>
        <fullName evidence="1">2-nonaprenyl-3-methyl-6-methoxy-1,4-benzoquinol hydroxylase</fullName>
    </alternativeName>
</protein>
<reference key="1">
    <citation type="journal article" date="2006" name="Nat. Biotechnol.">
        <title>Complete genome of the mutualistic, N2-fixing grass endophyte Azoarcus sp. strain BH72.</title>
        <authorList>
            <person name="Krause A."/>
            <person name="Ramakumar A."/>
            <person name="Bartels D."/>
            <person name="Battistoni F."/>
            <person name="Bekel T."/>
            <person name="Boch J."/>
            <person name="Boehm M."/>
            <person name="Friedrich F."/>
            <person name="Hurek T."/>
            <person name="Krause L."/>
            <person name="Linke B."/>
            <person name="McHardy A.C."/>
            <person name="Sarkar A."/>
            <person name="Schneiker S."/>
            <person name="Syed A.A."/>
            <person name="Thauer R."/>
            <person name="Vorhoelter F.-J."/>
            <person name="Weidner S."/>
            <person name="Puehler A."/>
            <person name="Reinhold-Hurek B."/>
            <person name="Kaiser O."/>
            <person name="Goesmann A."/>
        </authorList>
    </citation>
    <scope>NUCLEOTIDE SEQUENCE [LARGE SCALE GENOMIC DNA]</scope>
    <source>
        <strain>BH72</strain>
    </source>
</reference>
<gene>
    <name evidence="1" type="primary">coq7</name>
    <name type="ordered locus">azo2762</name>
</gene>